<organism>
    <name type="scientific">Salmonella gallinarum (strain 287/91 / NCTC 13346)</name>
    <dbReference type="NCBI Taxonomy" id="550538"/>
    <lineage>
        <taxon>Bacteria</taxon>
        <taxon>Pseudomonadati</taxon>
        <taxon>Pseudomonadota</taxon>
        <taxon>Gammaproteobacteria</taxon>
        <taxon>Enterobacterales</taxon>
        <taxon>Enterobacteriaceae</taxon>
        <taxon>Salmonella</taxon>
    </lineage>
</organism>
<accession>B5R6F7</accession>
<proteinExistence type="inferred from homology"/>
<evidence type="ECO:0000255" key="1">
    <source>
        <dbReference type="HAMAP-Rule" id="MF_01292"/>
    </source>
</evidence>
<gene>
    <name evidence="1" type="primary">hpcH</name>
    <name evidence="1" type="synonym">hpaI</name>
    <name type="ordered locus">SG0995</name>
</gene>
<keyword id="KW-0058">Aromatic hydrocarbons catabolism</keyword>
<keyword id="KW-0456">Lyase</keyword>
<keyword id="KW-0479">Metal-binding</keyword>
<reference key="1">
    <citation type="journal article" date="2008" name="Genome Res.">
        <title>Comparative genome analysis of Salmonella enteritidis PT4 and Salmonella gallinarum 287/91 provides insights into evolutionary and host adaptation pathways.</title>
        <authorList>
            <person name="Thomson N.R."/>
            <person name="Clayton D.J."/>
            <person name="Windhorst D."/>
            <person name="Vernikos G."/>
            <person name="Davidson S."/>
            <person name="Churcher C."/>
            <person name="Quail M.A."/>
            <person name="Stevens M."/>
            <person name="Jones M.A."/>
            <person name="Watson M."/>
            <person name="Barron A."/>
            <person name="Layton A."/>
            <person name="Pickard D."/>
            <person name="Kingsley R.A."/>
            <person name="Bignell A."/>
            <person name="Clark L."/>
            <person name="Harris B."/>
            <person name="Ormond D."/>
            <person name="Abdellah Z."/>
            <person name="Brooks K."/>
            <person name="Cherevach I."/>
            <person name="Chillingworth T."/>
            <person name="Woodward J."/>
            <person name="Norberczak H."/>
            <person name="Lord A."/>
            <person name="Arrowsmith C."/>
            <person name="Jagels K."/>
            <person name="Moule S."/>
            <person name="Mungall K."/>
            <person name="Saunders M."/>
            <person name="Whitehead S."/>
            <person name="Chabalgoity J.A."/>
            <person name="Maskell D."/>
            <person name="Humphreys T."/>
            <person name="Roberts M."/>
            <person name="Barrow P.A."/>
            <person name="Dougan G."/>
            <person name="Parkhill J."/>
        </authorList>
    </citation>
    <scope>NUCLEOTIDE SEQUENCE [LARGE SCALE GENOMIC DNA]</scope>
    <source>
        <strain>287/91 / NCTC 13346</strain>
    </source>
</reference>
<sequence>MKNAFKDALKAGRPQIGLWLGLANSYSAELLAGAGFDWLLIDGEHAPNNVQTVLTQLQAIAPYPSQPVVRPSWNDPVQIKQLLDVGAQTLLIPMVQNADEARNAVAATRYPPAGIRGVGSALARASRWNRIPDYLHQANDAMCVLVQIETREAMSNLASILDVDGIDGVFIGPADLSADMGFAGNPQHPEVQAAIENAIVQIRAAGKAPGILMANEALAKRYLELGALFVAVGVDTTLLARGAEALAARFGAEKKLSGASGVY</sequence>
<dbReference type="EC" id="4.1.2.52" evidence="1"/>
<dbReference type="EMBL" id="AM933173">
    <property type="protein sequence ID" value="CAR36884.1"/>
    <property type="molecule type" value="Genomic_DNA"/>
</dbReference>
<dbReference type="RefSeq" id="WP_000785061.1">
    <property type="nucleotide sequence ID" value="NC_011274.1"/>
</dbReference>
<dbReference type="SMR" id="B5R6F7"/>
<dbReference type="KEGG" id="seg:SG0995"/>
<dbReference type="HOGENOM" id="CLU_059964_1_0_6"/>
<dbReference type="UniPathway" id="UPA00208">
    <property type="reaction ID" value="UER00422"/>
</dbReference>
<dbReference type="Proteomes" id="UP000008321">
    <property type="component" value="Chromosome"/>
</dbReference>
<dbReference type="GO" id="GO:0005737">
    <property type="term" value="C:cytoplasm"/>
    <property type="evidence" value="ECO:0007669"/>
    <property type="project" value="TreeGrafter"/>
</dbReference>
<dbReference type="GO" id="GO:0043863">
    <property type="term" value="F:4-hydroxy-2-ketopimelate aldolase activity"/>
    <property type="evidence" value="ECO:0007669"/>
    <property type="project" value="RHEA"/>
</dbReference>
<dbReference type="GO" id="GO:0046872">
    <property type="term" value="F:metal ion binding"/>
    <property type="evidence" value="ECO:0007669"/>
    <property type="project" value="UniProtKB-UniRule"/>
</dbReference>
<dbReference type="GO" id="GO:1901023">
    <property type="term" value="P:4-hydroxyphenylacetate catabolic process"/>
    <property type="evidence" value="ECO:0007669"/>
    <property type="project" value="UniProtKB-UniRule"/>
</dbReference>
<dbReference type="GO" id="GO:0010124">
    <property type="term" value="P:phenylacetate catabolic process"/>
    <property type="evidence" value="ECO:0007669"/>
    <property type="project" value="InterPro"/>
</dbReference>
<dbReference type="FunFam" id="3.20.20.60:FF:000004">
    <property type="entry name" value="5-keto-4-deoxy-D-glucarate aldolase"/>
    <property type="match status" value="1"/>
</dbReference>
<dbReference type="Gene3D" id="3.20.20.60">
    <property type="entry name" value="Phosphoenolpyruvate-binding domains"/>
    <property type="match status" value="1"/>
</dbReference>
<dbReference type="HAMAP" id="MF_01292">
    <property type="entry name" value="HKHD_aldolase"/>
    <property type="match status" value="1"/>
</dbReference>
<dbReference type="InterPro" id="IPR005000">
    <property type="entry name" value="Aldolase/citrate-lyase_domain"/>
</dbReference>
<dbReference type="InterPro" id="IPR023701">
    <property type="entry name" value="HKHD_aldolase_ent"/>
</dbReference>
<dbReference type="InterPro" id="IPR012689">
    <property type="entry name" value="HpaI"/>
</dbReference>
<dbReference type="InterPro" id="IPR050251">
    <property type="entry name" value="HpcH-HpaI_aldolase"/>
</dbReference>
<dbReference type="InterPro" id="IPR015813">
    <property type="entry name" value="Pyrv/PenolPyrv_kinase-like_dom"/>
</dbReference>
<dbReference type="InterPro" id="IPR040442">
    <property type="entry name" value="Pyrv_kinase-like_dom_sf"/>
</dbReference>
<dbReference type="NCBIfam" id="TIGR02311">
    <property type="entry name" value="HpaI"/>
    <property type="match status" value="1"/>
</dbReference>
<dbReference type="PANTHER" id="PTHR30502">
    <property type="entry name" value="2-KETO-3-DEOXY-L-RHAMNONATE ALDOLASE"/>
    <property type="match status" value="1"/>
</dbReference>
<dbReference type="PANTHER" id="PTHR30502:SF0">
    <property type="entry name" value="PHOSPHOENOLPYRUVATE CARBOXYLASE FAMILY PROTEIN"/>
    <property type="match status" value="1"/>
</dbReference>
<dbReference type="Pfam" id="PF03328">
    <property type="entry name" value="HpcH_HpaI"/>
    <property type="match status" value="1"/>
</dbReference>
<dbReference type="SUPFAM" id="SSF51621">
    <property type="entry name" value="Phosphoenolpyruvate/pyruvate domain"/>
    <property type="match status" value="1"/>
</dbReference>
<feature type="chain" id="PRO_1000140423" description="4-hydroxy-2-oxo-heptane-1,7-dioate aldolase">
    <location>
        <begin position="1"/>
        <end position="263"/>
    </location>
</feature>
<feature type="active site" description="Proton acceptor" evidence="1">
    <location>
        <position position="45"/>
    </location>
</feature>
<feature type="binding site" evidence="1">
    <location>
        <position position="147"/>
    </location>
    <ligand>
        <name>substrate</name>
    </ligand>
</feature>
<feature type="binding site" evidence="1">
    <location>
        <position position="149"/>
    </location>
    <ligand>
        <name>a divalent metal cation</name>
        <dbReference type="ChEBI" id="CHEBI:60240"/>
    </ligand>
</feature>
<feature type="binding site" evidence="1">
    <location>
        <position position="174"/>
    </location>
    <ligand>
        <name>substrate</name>
    </ligand>
</feature>
<feature type="binding site" evidence="1">
    <location>
        <position position="175"/>
    </location>
    <ligand>
        <name>a divalent metal cation</name>
        <dbReference type="ChEBI" id="CHEBI:60240"/>
    </ligand>
</feature>
<feature type="binding site" evidence="1">
    <location>
        <position position="175"/>
    </location>
    <ligand>
        <name>substrate</name>
    </ligand>
</feature>
<feature type="site" description="Transition state stabilizer" evidence="1">
    <location>
        <position position="70"/>
    </location>
</feature>
<feature type="site" description="Increases basicity of active site His" evidence="1">
    <location>
        <position position="84"/>
    </location>
</feature>
<name>HPCH_SALG2</name>
<protein>
    <recommendedName>
        <fullName evidence="1">4-hydroxy-2-oxo-heptane-1,7-dioate aldolase</fullName>
        <ecNumber evidence="1">4.1.2.52</ecNumber>
    </recommendedName>
    <alternativeName>
        <fullName evidence="1">2,4-dihydroxyhept-2-ene-1,7-dioic acid aldolase</fullName>
        <shortName evidence="1">HHED aldolase</shortName>
    </alternativeName>
    <alternativeName>
        <fullName evidence="1">4-hydroxy-2-ketoheptane-1,7-dioate aldolase</fullName>
        <shortName evidence="1">HKHD aldolase</shortName>
    </alternativeName>
</protein>
<comment type="function">
    <text evidence="1">Catalyzes the reversible retro-aldol cleavage of 4-hydroxy-2-ketoheptane-1,7-dioate (HKHD) to pyruvate and succinic semialdehyde.</text>
</comment>
<comment type="catalytic activity">
    <reaction evidence="1">
        <text>4-hydroxy-2-oxoheptanedioate = succinate semialdehyde + pyruvate</text>
        <dbReference type="Rhea" id="RHEA:25788"/>
        <dbReference type="ChEBI" id="CHEBI:15361"/>
        <dbReference type="ChEBI" id="CHEBI:57706"/>
        <dbReference type="ChEBI" id="CHEBI:73036"/>
        <dbReference type="EC" id="4.1.2.52"/>
    </reaction>
</comment>
<comment type="cofactor">
    <cofactor evidence="1">
        <name>a divalent metal cation</name>
        <dbReference type="ChEBI" id="CHEBI:60240"/>
    </cofactor>
    <text evidence="1">Binds 1 divalent metal cation per subunit.</text>
</comment>
<comment type="pathway">
    <text evidence="1">Aromatic compound metabolism; 4-hydroxyphenylacetate degradation; pyruvate and succinate semialdehyde from 4-hydroxyphenylacetate: step 7/7.</text>
</comment>
<comment type="subunit">
    <text evidence="1">Homohexamer; trimer of dimers.</text>
</comment>
<comment type="similarity">
    <text evidence="1">Belongs to the HpcH/HpaI aldolase family.</text>
</comment>